<proteinExistence type="inferred from homology"/>
<sequence>MNIPHYSLETLAHLVQGELFGDEHFNLSGLASLEQAQSHHISFVNGEKYVEAAKQSKAGALIVTSAFKDQLPASQNYIVVKNPYLAFAQLTHVFEKKMTQRGIESTAKIHPSAMIADNAYIGHYVIIGAECVVGENTVILAHSFLGDNVEIGRDGFVESNVSLLQGTKIKDRVRIHANTVIGSEGFGFAPYQGKWHRIVQLGTVQIGHDVRIGSNCSIDRGALDDTIIEDGVIIDNLVQIAHNVRIGSNTAIAAKCGIAGSTVIGKNCILAGACGVVGHITITDNVTLTGMSMVTKSISEAGTYSSGTALMENNQWKRTIVRFRQLADVPLTQIMKRLDHIQTQIESLESTFKLRK</sequence>
<name>LPXD_ACIAD</name>
<comment type="function">
    <text evidence="1">Catalyzes the N-acylation of UDP-3-O-acylglucosamine using 3-hydroxyacyl-ACP as the acyl donor. Is involved in the biosynthesis of lipid A, a phosphorylated glycolipid that anchors the lipopolysaccharide to the outer membrane of the cell.</text>
</comment>
<comment type="catalytic activity">
    <reaction evidence="1">
        <text>a UDP-3-O-[(3R)-3-hydroxyacyl]-alpha-D-glucosamine + a (3R)-hydroxyacyl-[ACP] = a UDP-2-N,3-O-bis[(3R)-3-hydroxyacyl]-alpha-D-glucosamine + holo-[ACP] + H(+)</text>
        <dbReference type="Rhea" id="RHEA:53836"/>
        <dbReference type="Rhea" id="RHEA-COMP:9685"/>
        <dbReference type="Rhea" id="RHEA-COMP:9945"/>
        <dbReference type="ChEBI" id="CHEBI:15378"/>
        <dbReference type="ChEBI" id="CHEBI:64479"/>
        <dbReference type="ChEBI" id="CHEBI:78827"/>
        <dbReference type="ChEBI" id="CHEBI:137740"/>
        <dbReference type="ChEBI" id="CHEBI:137748"/>
        <dbReference type="EC" id="2.3.1.191"/>
    </reaction>
</comment>
<comment type="pathway">
    <text evidence="1">Bacterial outer membrane biogenesis; LPS lipid A biosynthesis.</text>
</comment>
<comment type="subunit">
    <text evidence="1">Homotrimer.</text>
</comment>
<comment type="similarity">
    <text evidence="1">Belongs to the transferase hexapeptide repeat family. LpxD subfamily.</text>
</comment>
<feature type="chain" id="PRO_0000059640" description="UDP-3-O-acylglucosamine N-acyltransferase">
    <location>
        <begin position="1"/>
        <end position="356"/>
    </location>
</feature>
<feature type="active site" description="Proton acceptor" evidence="1">
    <location>
        <position position="242"/>
    </location>
</feature>
<organism>
    <name type="scientific">Acinetobacter baylyi (strain ATCC 33305 / BD413 / ADP1)</name>
    <dbReference type="NCBI Taxonomy" id="62977"/>
    <lineage>
        <taxon>Bacteria</taxon>
        <taxon>Pseudomonadati</taxon>
        <taxon>Pseudomonadota</taxon>
        <taxon>Gammaproteobacteria</taxon>
        <taxon>Moraxellales</taxon>
        <taxon>Moraxellaceae</taxon>
        <taxon>Acinetobacter</taxon>
    </lineage>
</organism>
<evidence type="ECO:0000255" key="1">
    <source>
        <dbReference type="HAMAP-Rule" id="MF_00523"/>
    </source>
</evidence>
<dbReference type="EC" id="2.3.1.191" evidence="1"/>
<dbReference type="EMBL" id="CR543861">
    <property type="protein sequence ID" value="CAG68246.1"/>
    <property type="molecule type" value="Genomic_DNA"/>
</dbReference>
<dbReference type="RefSeq" id="WP_011182273.1">
    <property type="nucleotide sequence ID" value="NC_005966.1"/>
</dbReference>
<dbReference type="SMR" id="Q6FCG5"/>
<dbReference type="STRING" id="202950.GCA_001485005_01137"/>
<dbReference type="GeneID" id="45233795"/>
<dbReference type="KEGG" id="aci:ACIAD1380"/>
<dbReference type="eggNOG" id="COG1044">
    <property type="taxonomic scope" value="Bacteria"/>
</dbReference>
<dbReference type="HOGENOM" id="CLU_049865_0_1_6"/>
<dbReference type="OrthoDB" id="9784739at2"/>
<dbReference type="BioCyc" id="ASP62977:ACIAD_RS06365-MONOMER"/>
<dbReference type="UniPathway" id="UPA00973"/>
<dbReference type="Proteomes" id="UP000000430">
    <property type="component" value="Chromosome"/>
</dbReference>
<dbReference type="GO" id="GO:0016020">
    <property type="term" value="C:membrane"/>
    <property type="evidence" value="ECO:0007669"/>
    <property type="project" value="GOC"/>
</dbReference>
<dbReference type="GO" id="GO:0016410">
    <property type="term" value="F:N-acyltransferase activity"/>
    <property type="evidence" value="ECO:0007669"/>
    <property type="project" value="InterPro"/>
</dbReference>
<dbReference type="GO" id="GO:0009245">
    <property type="term" value="P:lipid A biosynthetic process"/>
    <property type="evidence" value="ECO:0007669"/>
    <property type="project" value="UniProtKB-UniRule"/>
</dbReference>
<dbReference type="CDD" id="cd03352">
    <property type="entry name" value="LbH_LpxD"/>
    <property type="match status" value="1"/>
</dbReference>
<dbReference type="Gene3D" id="1.20.5.170">
    <property type="match status" value="1"/>
</dbReference>
<dbReference type="Gene3D" id="2.160.10.10">
    <property type="entry name" value="Hexapeptide repeat proteins"/>
    <property type="match status" value="1"/>
</dbReference>
<dbReference type="Gene3D" id="3.40.1390.10">
    <property type="entry name" value="MurE/MurF, N-terminal domain"/>
    <property type="match status" value="1"/>
</dbReference>
<dbReference type="HAMAP" id="MF_00523">
    <property type="entry name" value="LpxD"/>
    <property type="match status" value="1"/>
</dbReference>
<dbReference type="InterPro" id="IPR001451">
    <property type="entry name" value="Hexapep"/>
</dbReference>
<dbReference type="InterPro" id="IPR007691">
    <property type="entry name" value="LpxD"/>
</dbReference>
<dbReference type="InterPro" id="IPR011004">
    <property type="entry name" value="Trimer_LpxA-like_sf"/>
</dbReference>
<dbReference type="InterPro" id="IPR020573">
    <property type="entry name" value="UDP_GlcNAc_AcTrfase_non-rep"/>
</dbReference>
<dbReference type="NCBIfam" id="TIGR01853">
    <property type="entry name" value="lipid_A_lpxD"/>
    <property type="match status" value="1"/>
</dbReference>
<dbReference type="NCBIfam" id="NF002060">
    <property type="entry name" value="PRK00892.1"/>
    <property type="match status" value="1"/>
</dbReference>
<dbReference type="PANTHER" id="PTHR43378">
    <property type="entry name" value="UDP-3-O-ACYLGLUCOSAMINE N-ACYLTRANSFERASE"/>
    <property type="match status" value="1"/>
</dbReference>
<dbReference type="PANTHER" id="PTHR43378:SF2">
    <property type="entry name" value="UDP-3-O-ACYLGLUCOSAMINE N-ACYLTRANSFERASE 1, MITOCHONDRIAL-RELATED"/>
    <property type="match status" value="1"/>
</dbReference>
<dbReference type="Pfam" id="PF00132">
    <property type="entry name" value="Hexapep"/>
    <property type="match status" value="1"/>
</dbReference>
<dbReference type="Pfam" id="PF04613">
    <property type="entry name" value="LpxD"/>
    <property type="match status" value="1"/>
</dbReference>
<dbReference type="SUPFAM" id="SSF51161">
    <property type="entry name" value="Trimeric LpxA-like enzymes"/>
    <property type="match status" value="1"/>
</dbReference>
<protein>
    <recommendedName>
        <fullName evidence="1">UDP-3-O-acylglucosamine N-acyltransferase</fullName>
        <ecNumber evidence="1">2.3.1.191</ecNumber>
    </recommendedName>
</protein>
<reference key="1">
    <citation type="journal article" date="2004" name="Nucleic Acids Res.">
        <title>Unique features revealed by the genome sequence of Acinetobacter sp. ADP1, a versatile and naturally transformation competent bacterium.</title>
        <authorList>
            <person name="Barbe V."/>
            <person name="Vallenet D."/>
            <person name="Fonknechten N."/>
            <person name="Kreimeyer A."/>
            <person name="Oztas S."/>
            <person name="Labarre L."/>
            <person name="Cruveiller S."/>
            <person name="Robert C."/>
            <person name="Duprat S."/>
            <person name="Wincker P."/>
            <person name="Ornston L.N."/>
            <person name="Weissenbach J."/>
            <person name="Marliere P."/>
            <person name="Cohen G.N."/>
            <person name="Medigue C."/>
        </authorList>
    </citation>
    <scope>NUCLEOTIDE SEQUENCE [LARGE SCALE GENOMIC DNA]</scope>
    <source>
        <strain>ATCC 33305 / BD413 / ADP1</strain>
    </source>
</reference>
<keyword id="KW-0012">Acyltransferase</keyword>
<keyword id="KW-0441">Lipid A biosynthesis</keyword>
<keyword id="KW-0444">Lipid biosynthesis</keyword>
<keyword id="KW-0443">Lipid metabolism</keyword>
<keyword id="KW-0677">Repeat</keyword>
<keyword id="KW-0808">Transferase</keyword>
<accession>Q6FCG5</accession>
<gene>
    <name evidence="1" type="primary">lpxD</name>
    <name type="ordered locus">ACIAD1380</name>
</gene>